<keyword id="KW-0007">Acetylation</keyword>
<keyword id="KW-0051">Antiviral defense</keyword>
<keyword id="KW-0072">Autophagy</keyword>
<keyword id="KW-0175">Coiled coil</keyword>
<keyword id="KW-0963">Cytoplasm</keyword>
<keyword id="KW-0391">Immunity</keyword>
<keyword id="KW-0399">Innate immunity</keyword>
<keyword id="KW-0479">Metal-binding</keyword>
<keyword id="KW-0539">Nucleus</keyword>
<keyword id="KW-0597">Phosphoprotein</keyword>
<keyword id="KW-0808">Transferase</keyword>
<keyword id="KW-0832">Ubl conjugation</keyword>
<keyword id="KW-0833">Ubl conjugation pathway</keyword>
<keyword id="KW-0862">Zinc</keyword>
<keyword id="KW-0863">Zinc-finger</keyword>
<gene>
    <name type="primary">TRIM5</name>
</gene>
<protein>
    <recommendedName>
        <fullName>Tripartite motif-containing protein 5</fullName>
        <ecNumber>2.3.2.27</ecNumber>
    </recommendedName>
    <alternativeName>
        <fullName evidence="8">RING-type E3 ubiquitin transferase TRIM5</fullName>
    </alternativeName>
    <alternativeName>
        <fullName>TRIM5alpha</fullName>
    </alternativeName>
</protein>
<proteinExistence type="inferred from homology"/>
<feature type="initiator methionine" description="Removed" evidence="3">
    <location>
        <position position="1"/>
    </location>
</feature>
<feature type="chain" id="PRO_0000273475" description="Tripartite motif-containing protein 5">
    <location>
        <begin position="2"/>
        <end position="494"/>
    </location>
</feature>
<feature type="domain" description="B30.2/SPRY" evidence="7">
    <location>
        <begin position="280"/>
        <end position="494"/>
    </location>
</feature>
<feature type="zinc finger region" description="RING-type" evidence="6">
    <location>
        <begin position="15"/>
        <end position="59"/>
    </location>
</feature>
<feature type="zinc finger region" description="B box-type" evidence="5">
    <location>
        <begin position="91"/>
        <end position="132"/>
    </location>
</feature>
<feature type="region of interest" description="Required for interaction with GABARAP and for autophagy" evidence="2">
    <location>
        <begin position="186"/>
        <end position="199"/>
    </location>
</feature>
<feature type="coiled-coil region" evidence="4">
    <location>
        <begin position="131"/>
        <end position="223"/>
    </location>
</feature>
<feature type="binding site" evidence="5">
    <location>
        <position position="96"/>
    </location>
    <ligand>
        <name>Zn(2+)</name>
        <dbReference type="ChEBI" id="CHEBI:29105"/>
    </ligand>
</feature>
<feature type="binding site" evidence="5">
    <location>
        <position position="99"/>
    </location>
    <ligand>
        <name>Zn(2+)</name>
        <dbReference type="ChEBI" id="CHEBI:29105"/>
    </ligand>
</feature>
<feature type="binding site" evidence="5">
    <location>
        <position position="118"/>
    </location>
    <ligand>
        <name>Zn(2+)</name>
        <dbReference type="ChEBI" id="CHEBI:29105"/>
    </ligand>
</feature>
<feature type="binding site" evidence="5">
    <location>
        <position position="124"/>
    </location>
    <ligand>
        <name>Zn(2+)</name>
        <dbReference type="ChEBI" id="CHEBI:29105"/>
    </ligand>
</feature>
<feature type="modified residue" description="N-acetylalanine" evidence="3">
    <location>
        <position position="2"/>
    </location>
</feature>
<feature type="modified residue" description="Phosphoserine" evidence="3">
    <location>
        <position position="86"/>
    </location>
</feature>
<name>TRIM5_SAGOE</name>
<accession>Q1ACD5</accession>
<comment type="function">
    <text evidence="3">Capsid-specific restriction factor that prevents infection from non-host-adapted retroviruses. Blocks viral replication early in the life cycle, after viral entry but before reverse transcription. In addition to acting as a capsid-specific restriction factor, also acts as a pattern recognition receptor that activates innate immune signaling in response to the retroviral capsid lattice. Binding to the viral capsid triggers its E3 ubiquitin ligase activity, and in concert with the heterodimeric ubiquitin conjugating enzyme complex UBE2V1-UBE2N (also known as UBC13-UEV1A complex) generates 'Lys-63'-linked polyubiquitin chains, which in turn are catalysts in the autophosphorylation of the MAP3K7/TAK1 complex (includes TAK1, TAB2, and TAB3). Activation of the MAP3K7/TAK1 complex by autophosphorylation results in the induction and expression of NF-kappa-B and MAPK-responsive inflammatory genes, thereby leading to an innate immune response in the infected cell. Plays a role in regulating autophagy through activation of autophagy regulator BECN1 by causing its dissociation from its inhibitors BCL2 and TAB2.</text>
</comment>
<comment type="catalytic activity">
    <reaction>
        <text>S-ubiquitinyl-[E2 ubiquitin-conjugating enzyme]-L-cysteine + [acceptor protein]-L-lysine = [E2 ubiquitin-conjugating enzyme]-L-cysteine + N(6)-ubiquitinyl-[acceptor protein]-L-lysine.</text>
        <dbReference type="EC" id="2.3.2.27"/>
    </reaction>
</comment>
<comment type="pathway">
    <text>Protein modification; protein ubiquitination.</text>
</comment>
<comment type="subunit">
    <text evidence="2 3">Can form homodimers and homotrimers. In addition to lower-order dimerization, also exhibits a higher-order multimerization and both low- and high-order multimerizations are essential for its restriction activity. Interacts with BTBD1 and BTBD2. Interacts with PSMC4, PSMC5, PSMD7 and HSPA8/HSC70. Interacts (via B30.2/SPRY domain) with HSPA1A/B. Interacts with PSMC2, MAP3K7/TAK1, TAB2 and TAB3. Interacts with SQSTM1. Interacts with TRIM6 and TRIM34. Interacts with ULK1 (phosphorylated form), GABARAP, GABARAPL1, GABARAPL2, MAP1LC3A, MAP1LC3C and BECN1.</text>
</comment>
<comment type="subcellular location">
    <subcellularLocation>
        <location evidence="2">Cytoplasm</location>
    </subcellularLocation>
    <subcellularLocation>
        <location evidence="2">Nucleus</location>
    </subcellularLocation>
    <text evidence="2">Predominantly localizes in cytoplasmic bodies. Localization may be influenced by the coexpression of other TRIM proteins, hence partial nuclear localization is observed in the presence of TRIM22 or TRIM27. In cytoplasmic bodies, colocalizes with proteasomal subunits and SQSTM1.</text>
</comment>
<comment type="domain">
    <text evidence="2 3">The B box-type zinc finger domain and the coiled-coil domain contribute to the higher and low order multimerization respectively which is essential for restriction activity. The coiled coil domain is important for higher order multimerization by promoting the initial dimerization.</text>
</comment>
<comment type="domain">
    <text evidence="1">The B30.2/SPRY domain acts as a capsid recognition domain. Polymorphisms in this domain explain the observed species-specific differences among orthologs (By similarity).</text>
</comment>
<comment type="domain">
    <text evidence="1">The RING-type zinc finger domain confers E3 ubiquitin ligase activity and is essential for retrovirus restriction activity, autoubiquitination and higher-order multimerization.</text>
</comment>
<comment type="PTM">
    <text evidence="1">Degraded in a proteasome-independent fashion in the absence of viral infection but in a proteasome-dependent fashion following exposure to restriction sensitive virus.</text>
</comment>
<comment type="PTM">
    <text evidence="1">Autoubiquitinated in a RING finger- and UBE2D2-dependent manner. Monoubiquitinated by TRIM21. Deubiquitinated by Yersinia YopJ. Ubiquitination may not lead to proteasomal degradation (By similarity).</text>
</comment>
<comment type="similarity">
    <text evidence="8">Belongs to the TRIM/RBCC family.</text>
</comment>
<sequence>MASRILVNIKEEVTCPICLELLTEPLSLDCGHSFCQACITANHKESTPHQGERSCPLCRMSYPSENLRPNRHLANIVERLKEVMLSPEKGQKVGHCARHGEKLLLFCEQDGNVICWLCERSQEHRGHHTFLVEEVAEKYQEKLQVALEMMRQKQQDAEKLEADVREEQASWKIQIRNDKTNIMAEFKQLRDILDCEESKELQNLEKEEKNILKRLVQSESDMALQTQSMRVLISDLERRLQGSVLELLQGVDDVIKRIETVTLQKPKTFLNEKRRVFRAPDLKGMLQAFKELTEVQRYWAHVTLVPSHPSYTVISEDERQVRYQFPIHQPSVKVNYFYGVLGSPSITSGKHYWEVDVSNKRAWILGVCVSLKYNAKWNVLRPENYQPKNGYWVIGLQNTNNYSAFQDAVKYSDFQIGSRSTASVPLIVPLFMTICPNRVGVFLDYEACTVSFFNVTNNGFLIYKFSNCHFSYPVFPYFSPVTCELPMTLCSPSS</sequence>
<dbReference type="EC" id="2.3.2.27"/>
<dbReference type="EMBL" id="DQ229285">
    <property type="protein sequence ID" value="ABC33741.1"/>
    <property type="molecule type" value="Genomic_DNA"/>
</dbReference>
<dbReference type="SMR" id="Q1ACD5"/>
<dbReference type="UniPathway" id="UPA00143"/>
<dbReference type="GO" id="GO:0005634">
    <property type="term" value="C:nucleus"/>
    <property type="evidence" value="ECO:0007669"/>
    <property type="project" value="UniProtKB-SubCell"/>
</dbReference>
<dbReference type="GO" id="GO:0000932">
    <property type="term" value="C:P-body"/>
    <property type="evidence" value="ECO:0000250"/>
    <property type="project" value="UniProtKB"/>
</dbReference>
<dbReference type="GO" id="GO:0038187">
    <property type="term" value="F:pattern recognition receptor activity"/>
    <property type="evidence" value="ECO:0000250"/>
    <property type="project" value="UniProtKB"/>
</dbReference>
<dbReference type="GO" id="GO:0004842">
    <property type="term" value="F:ubiquitin-protein transferase activity"/>
    <property type="evidence" value="ECO:0000250"/>
    <property type="project" value="UniProtKB"/>
</dbReference>
<dbReference type="GO" id="GO:0008270">
    <property type="term" value="F:zinc ion binding"/>
    <property type="evidence" value="ECO:0007669"/>
    <property type="project" value="UniProtKB-KW"/>
</dbReference>
<dbReference type="GO" id="GO:0002218">
    <property type="term" value="P:activation of innate immune response"/>
    <property type="evidence" value="ECO:0000250"/>
    <property type="project" value="UniProtKB"/>
</dbReference>
<dbReference type="GO" id="GO:0006914">
    <property type="term" value="P:autophagy"/>
    <property type="evidence" value="ECO:0007669"/>
    <property type="project" value="UniProtKB-KW"/>
</dbReference>
<dbReference type="GO" id="GO:0051607">
    <property type="term" value="P:defense response to virus"/>
    <property type="evidence" value="ECO:0007669"/>
    <property type="project" value="UniProtKB-KW"/>
</dbReference>
<dbReference type="GO" id="GO:0045087">
    <property type="term" value="P:innate immune response"/>
    <property type="evidence" value="ECO:0007669"/>
    <property type="project" value="UniProtKB-KW"/>
</dbReference>
<dbReference type="GO" id="GO:0043123">
    <property type="term" value="P:positive regulation of canonical NF-kappaB signal transduction"/>
    <property type="evidence" value="ECO:0000250"/>
    <property type="project" value="UniProtKB"/>
</dbReference>
<dbReference type="GO" id="GO:0043410">
    <property type="term" value="P:positive regulation of MAPK cascade"/>
    <property type="evidence" value="ECO:0000250"/>
    <property type="project" value="UniProtKB"/>
</dbReference>
<dbReference type="GO" id="GO:0051092">
    <property type="term" value="P:positive regulation of NF-kappaB transcription factor activity"/>
    <property type="evidence" value="ECO:0000250"/>
    <property type="project" value="UniProtKB"/>
</dbReference>
<dbReference type="GO" id="GO:0070534">
    <property type="term" value="P:protein K63-linked ubiquitination"/>
    <property type="evidence" value="ECO:0000250"/>
    <property type="project" value="UniProtKB"/>
</dbReference>
<dbReference type="GO" id="GO:0031664">
    <property type="term" value="P:regulation of lipopolysaccharide-mediated signaling pathway"/>
    <property type="evidence" value="ECO:0000250"/>
    <property type="project" value="UniProtKB"/>
</dbReference>
<dbReference type="CDD" id="cd19761">
    <property type="entry name" value="Bbox2_TRIM5-like"/>
    <property type="match status" value="1"/>
</dbReference>
<dbReference type="CDD" id="cd16591">
    <property type="entry name" value="RING-HC_TRIM5-like_C-IV"/>
    <property type="match status" value="1"/>
</dbReference>
<dbReference type="CDD" id="cd15822">
    <property type="entry name" value="SPRY_PRY_TRIM5"/>
    <property type="match status" value="1"/>
</dbReference>
<dbReference type="FunFam" id="2.60.120.920:FF:000023">
    <property type="entry name" value="Tripartite motif-containing 5 (Predicted)"/>
    <property type="match status" value="1"/>
</dbReference>
<dbReference type="FunFam" id="3.30.160.60:FF:000386">
    <property type="entry name" value="Tripartite motif-containing 5 (Predicted)"/>
    <property type="match status" value="1"/>
</dbReference>
<dbReference type="FunFam" id="3.30.40.10:FF:000144">
    <property type="entry name" value="Tripartite motif-containing 5 (Predicted)"/>
    <property type="match status" value="1"/>
</dbReference>
<dbReference type="Gene3D" id="2.60.120.920">
    <property type="match status" value="1"/>
</dbReference>
<dbReference type="Gene3D" id="3.30.160.60">
    <property type="entry name" value="Classic Zinc Finger"/>
    <property type="match status" value="1"/>
</dbReference>
<dbReference type="Gene3D" id="3.30.40.10">
    <property type="entry name" value="Zinc/RING finger domain, C3HC4 (zinc finger)"/>
    <property type="match status" value="1"/>
</dbReference>
<dbReference type="InterPro" id="IPR001870">
    <property type="entry name" value="B30.2/SPRY"/>
</dbReference>
<dbReference type="InterPro" id="IPR043136">
    <property type="entry name" value="B30.2/SPRY_sf"/>
</dbReference>
<dbReference type="InterPro" id="IPR003879">
    <property type="entry name" value="Butyrophylin_SPRY"/>
</dbReference>
<dbReference type="InterPro" id="IPR013320">
    <property type="entry name" value="ConA-like_dom_sf"/>
</dbReference>
<dbReference type="InterPro" id="IPR003877">
    <property type="entry name" value="SPRY_dom"/>
</dbReference>
<dbReference type="InterPro" id="IPR050143">
    <property type="entry name" value="TRIM/RBCC"/>
</dbReference>
<dbReference type="InterPro" id="IPR027370">
    <property type="entry name" value="Znf-RING_euk"/>
</dbReference>
<dbReference type="InterPro" id="IPR000315">
    <property type="entry name" value="Znf_B-box"/>
</dbReference>
<dbReference type="InterPro" id="IPR001841">
    <property type="entry name" value="Znf_RING"/>
</dbReference>
<dbReference type="InterPro" id="IPR013083">
    <property type="entry name" value="Znf_RING/FYVE/PHD"/>
</dbReference>
<dbReference type="InterPro" id="IPR017907">
    <property type="entry name" value="Znf_RING_CS"/>
</dbReference>
<dbReference type="PANTHER" id="PTHR24103">
    <property type="entry name" value="E3 UBIQUITIN-PROTEIN LIGASE TRIM"/>
    <property type="match status" value="1"/>
</dbReference>
<dbReference type="Pfam" id="PF00622">
    <property type="entry name" value="SPRY"/>
    <property type="match status" value="1"/>
</dbReference>
<dbReference type="Pfam" id="PF00643">
    <property type="entry name" value="zf-B_box"/>
    <property type="match status" value="1"/>
</dbReference>
<dbReference type="Pfam" id="PF13445">
    <property type="entry name" value="zf-RING_UBOX"/>
    <property type="match status" value="1"/>
</dbReference>
<dbReference type="PRINTS" id="PR01407">
    <property type="entry name" value="BUTYPHLNCDUF"/>
</dbReference>
<dbReference type="SMART" id="SM00336">
    <property type="entry name" value="BBOX"/>
    <property type="match status" value="1"/>
</dbReference>
<dbReference type="SMART" id="SM00184">
    <property type="entry name" value="RING"/>
    <property type="match status" value="1"/>
</dbReference>
<dbReference type="SMART" id="SM00449">
    <property type="entry name" value="SPRY"/>
    <property type="match status" value="1"/>
</dbReference>
<dbReference type="SUPFAM" id="SSF57845">
    <property type="entry name" value="B-box zinc-binding domain"/>
    <property type="match status" value="1"/>
</dbReference>
<dbReference type="SUPFAM" id="SSF49899">
    <property type="entry name" value="Concanavalin A-like lectins/glucanases"/>
    <property type="match status" value="1"/>
</dbReference>
<dbReference type="SUPFAM" id="SSF57850">
    <property type="entry name" value="RING/U-box"/>
    <property type="match status" value="1"/>
</dbReference>
<dbReference type="PROSITE" id="PS50188">
    <property type="entry name" value="B302_SPRY"/>
    <property type="match status" value="1"/>
</dbReference>
<dbReference type="PROSITE" id="PS50119">
    <property type="entry name" value="ZF_BBOX"/>
    <property type="match status" value="1"/>
</dbReference>
<dbReference type="PROSITE" id="PS00518">
    <property type="entry name" value="ZF_RING_1"/>
    <property type="match status" value="1"/>
</dbReference>
<dbReference type="PROSITE" id="PS50089">
    <property type="entry name" value="ZF_RING_2"/>
    <property type="match status" value="1"/>
</dbReference>
<evidence type="ECO:0000250" key="1"/>
<evidence type="ECO:0000250" key="2">
    <source>
        <dbReference type="UniProtKB" id="Q0PF16"/>
    </source>
</evidence>
<evidence type="ECO:0000250" key="3">
    <source>
        <dbReference type="UniProtKB" id="Q9C035"/>
    </source>
</evidence>
<evidence type="ECO:0000255" key="4"/>
<evidence type="ECO:0000255" key="5">
    <source>
        <dbReference type="PROSITE-ProRule" id="PRU00024"/>
    </source>
</evidence>
<evidence type="ECO:0000255" key="6">
    <source>
        <dbReference type="PROSITE-ProRule" id="PRU00175"/>
    </source>
</evidence>
<evidence type="ECO:0000255" key="7">
    <source>
        <dbReference type="PROSITE-ProRule" id="PRU00548"/>
    </source>
</evidence>
<evidence type="ECO:0000305" key="8"/>
<reference key="1">
    <citation type="journal article" date="2006" name="Retrovirology">
        <title>Patterns of evolution of host proteins involved in retroviral pathogenesis.</title>
        <authorList>
            <person name="Ortiz M."/>
            <person name="Bleiber G."/>
            <person name="Martinez R."/>
            <person name="Kaessmann H."/>
            <person name="Telenti A."/>
        </authorList>
    </citation>
    <scope>NUCLEOTIDE SEQUENCE [GENOMIC DNA]</scope>
</reference>
<organism>
    <name type="scientific">Saguinus oedipus</name>
    <name type="common">Cotton-top tamarin</name>
    <dbReference type="NCBI Taxonomy" id="9490"/>
    <lineage>
        <taxon>Eukaryota</taxon>
        <taxon>Metazoa</taxon>
        <taxon>Chordata</taxon>
        <taxon>Craniata</taxon>
        <taxon>Vertebrata</taxon>
        <taxon>Euteleostomi</taxon>
        <taxon>Mammalia</taxon>
        <taxon>Eutheria</taxon>
        <taxon>Euarchontoglires</taxon>
        <taxon>Primates</taxon>
        <taxon>Haplorrhini</taxon>
        <taxon>Platyrrhini</taxon>
        <taxon>Cebidae</taxon>
        <taxon>Callitrichinae</taxon>
        <taxon>Saguinus</taxon>
    </lineage>
</organism>